<name>PCKA_SALG2</name>
<feature type="chain" id="PRO_1000192326" description="Phosphoenolpyruvate carboxykinase (ATP)">
    <location>
        <begin position="1"/>
        <end position="539"/>
    </location>
</feature>
<feature type="binding site" evidence="1">
    <location>
        <position position="64"/>
    </location>
    <ligand>
        <name>substrate</name>
    </ligand>
</feature>
<feature type="binding site" evidence="1">
    <location>
        <position position="206"/>
    </location>
    <ligand>
        <name>substrate</name>
    </ligand>
</feature>
<feature type="binding site" evidence="1">
    <location>
        <position position="212"/>
    </location>
    <ligand>
        <name>ATP</name>
        <dbReference type="ChEBI" id="CHEBI:30616"/>
    </ligand>
</feature>
<feature type="binding site" evidence="1">
    <location>
        <position position="212"/>
    </location>
    <ligand>
        <name>Mn(2+)</name>
        <dbReference type="ChEBI" id="CHEBI:29035"/>
    </ligand>
</feature>
<feature type="binding site" evidence="1">
    <location>
        <position position="212"/>
    </location>
    <ligand>
        <name>substrate</name>
    </ligand>
</feature>
<feature type="binding site" evidence="1">
    <location>
        <position position="231"/>
    </location>
    <ligand>
        <name>ATP</name>
        <dbReference type="ChEBI" id="CHEBI:30616"/>
    </ligand>
</feature>
<feature type="binding site" evidence="1">
    <location>
        <position position="231"/>
    </location>
    <ligand>
        <name>Mn(2+)</name>
        <dbReference type="ChEBI" id="CHEBI:29035"/>
    </ligand>
</feature>
<feature type="binding site" evidence="1">
    <location>
        <begin position="247"/>
        <end position="255"/>
    </location>
    <ligand>
        <name>ATP</name>
        <dbReference type="ChEBI" id="CHEBI:30616"/>
    </ligand>
</feature>
<feature type="binding site" evidence="1">
    <location>
        <position position="268"/>
    </location>
    <ligand>
        <name>Mn(2+)</name>
        <dbReference type="ChEBI" id="CHEBI:29035"/>
    </ligand>
</feature>
<feature type="binding site" evidence="1">
    <location>
        <position position="296"/>
    </location>
    <ligand>
        <name>ATP</name>
        <dbReference type="ChEBI" id="CHEBI:30616"/>
    </ligand>
</feature>
<feature type="binding site" evidence="1">
    <location>
        <position position="332"/>
    </location>
    <ligand>
        <name>ATP</name>
        <dbReference type="ChEBI" id="CHEBI:30616"/>
    </ligand>
</feature>
<feature type="binding site" evidence="1">
    <location>
        <position position="332"/>
    </location>
    <ligand>
        <name>substrate</name>
    </ligand>
</feature>
<feature type="binding site" evidence="1">
    <location>
        <begin position="448"/>
        <end position="449"/>
    </location>
    <ligand>
        <name>ATP</name>
        <dbReference type="ChEBI" id="CHEBI:30616"/>
    </ligand>
</feature>
<feature type="binding site" evidence="1">
    <location>
        <position position="454"/>
    </location>
    <ligand>
        <name>ATP</name>
        <dbReference type="ChEBI" id="CHEBI:30616"/>
    </ligand>
</feature>
<dbReference type="EC" id="4.1.1.49" evidence="1"/>
<dbReference type="EMBL" id="AM933173">
    <property type="protein sequence ID" value="CAR39711.1"/>
    <property type="molecule type" value="Genomic_DNA"/>
</dbReference>
<dbReference type="RefSeq" id="WP_001265692.1">
    <property type="nucleotide sequence ID" value="NC_011274.1"/>
</dbReference>
<dbReference type="SMR" id="B5R7L4"/>
<dbReference type="KEGG" id="seg:SG3938"/>
<dbReference type="HOGENOM" id="CLU_018247_0_1_6"/>
<dbReference type="UniPathway" id="UPA00138"/>
<dbReference type="Proteomes" id="UP000008321">
    <property type="component" value="Chromosome"/>
</dbReference>
<dbReference type="GO" id="GO:0005829">
    <property type="term" value="C:cytosol"/>
    <property type="evidence" value="ECO:0007669"/>
    <property type="project" value="TreeGrafter"/>
</dbReference>
<dbReference type="GO" id="GO:0005524">
    <property type="term" value="F:ATP binding"/>
    <property type="evidence" value="ECO:0007669"/>
    <property type="project" value="UniProtKB-UniRule"/>
</dbReference>
<dbReference type="GO" id="GO:0046872">
    <property type="term" value="F:metal ion binding"/>
    <property type="evidence" value="ECO:0007669"/>
    <property type="project" value="UniProtKB-KW"/>
</dbReference>
<dbReference type="GO" id="GO:0004612">
    <property type="term" value="F:phosphoenolpyruvate carboxykinase (ATP) activity"/>
    <property type="evidence" value="ECO:0007669"/>
    <property type="project" value="UniProtKB-UniRule"/>
</dbReference>
<dbReference type="GO" id="GO:0006094">
    <property type="term" value="P:gluconeogenesis"/>
    <property type="evidence" value="ECO:0007669"/>
    <property type="project" value="UniProtKB-UniRule"/>
</dbReference>
<dbReference type="CDD" id="cd00484">
    <property type="entry name" value="PEPCK_ATP"/>
    <property type="match status" value="1"/>
</dbReference>
<dbReference type="FunFam" id="2.170.8.10:FF:000001">
    <property type="entry name" value="Phosphoenolpyruvate carboxykinase (ATP)"/>
    <property type="match status" value="1"/>
</dbReference>
<dbReference type="FunFam" id="3.40.449.10:FF:000001">
    <property type="entry name" value="Phosphoenolpyruvate carboxykinase (ATP)"/>
    <property type="match status" value="1"/>
</dbReference>
<dbReference type="Gene3D" id="3.90.228.20">
    <property type="match status" value="1"/>
</dbReference>
<dbReference type="Gene3D" id="3.40.449.10">
    <property type="entry name" value="Phosphoenolpyruvate Carboxykinase, domain 1"/>
    <property type="match status" value="1"/>
</dbReference>
<dbReference type="Gene3D" id="2.170.8.10">
    <property type="entry name" value="Phosphoenolpyruvate Carboxykinase, domain 2"/>
    <property type="match status" value="1"/>
</dbReference>
<dbReference type="HAMAP" id="MF_00453">
    <property type="entry name" value="PEPCK_ATP"/>
    <property type="match status" value="1"/>
</dbReference>
<dbReference type="InterPro" id="IPR001272">
    <property type="entry name" value="PEP_carboxykinase_ATP"/>
</dbReference>
<dbReference type="InterPro" id="IPR013035">
    <property type="entry name" value="PEP_carboxykinase_C"/>
</dbReference>
<dbReference type="InterPro" id="IPR008210">
    <property type="entry name" value="PEP_carboxykinase_N"/>
</dbReference>
<dbReference type="InterPro" id="IPR015994">
    <property type="entry name" value="PEPCK_ATP_CS"/>
</dbReference>
<dbReference type="NCBIfam" id="TIGR00224">
    <property type="entry name" value="pckA"/>
    <property type="match status" value="1"/>
</dbReference>
<dbReference type="NCBIfam" id="NF006819">
    <property type="entry name" value="PRK09344.1-1"/>
    <property type="match status" value="1"/>
</dbReference>
<dbReference type="NCBIfam" id="NF006820">
    <property type="entry name" value="PRK09344.1-2"/>
    <property type="match status" value="1"/>
</dbReference>
<dbReference type="NCBIfam" id="NF006821">
    <property type="entry name" value="PRK09344.1-3"/>
    <property type="match status" value="1"/>
</dbReference>
<dbReference type="PANTHER" id="PTHR30031:SF0">
    <property type="entry name" value="PHOSPHOENOLPYRUVATE CARBOXYKINASE (ATP)"/>
    <property type="match status" value="1"/>
</dbReference>
<dbReference type="PANTHER" id="PTHR30031">
    <property type="entry name" value="PHOSPHOENOLPYRUVATE CARBOXYKINASE ATP"/>
    <property type="match status" value="1"/>
</dbReference>
<dbReference type="Pfam" id="PF01293">
    <property type="entry name" value="PEPCK_ATP"/>
    <property type="match status" value="1"/>
</dbReference>
<dbReference type="PIRSF" id="PIRSF006294">
    <property type="entry name" value="PEP_crbxkin"/>
    <property type="match status" value="1"/>
</dbReference>
<dbReference type="SUPFAM" id="SSF68923">
    <property type="entry name" value="PEP carboxykinase N-terminal domain"/>
    <property type="match status" value="1"/>
</dbReference>
<dbReference type="SUPFAM" id="SSF53795">
    <property type="entry name" value="PEP carboxykinase-like"/>
    <property type="match status" value="1"/>
</dbReference>
<dbReference type="PROSITE" id="PS00532">
    <property type="entry name" value="PEPCK_ATP"/>
    <property type="match status" value="1"/>
</dbReference>
<comment type="function">
    <text evidence="1">Involved in the gluconeogenesis. Catalyzes the conversion of oxaloacetate (OAA) to phosphoenolpyruvate (PEP) through direct phosphoryl transfer between the nucleoside triphosphate and OAA.</text>
</comment>
<comment type="catalytic activity">
    <reaction evidence="1">
        <text>oxaloacetate + ATP = phosphoenolpyruvate + ADP + CO2</text>
        <dbReference type="Rhea" id="RHEA:18617"/>
        <dbReference type="ChEBI" id="CHEBI:16452"/>
        <dbReference type="ChEBI" id="CHEBI:16526"/>
        <dbReference type="ChEBI" id="CHEBI:30616"/>
        <dbReference type="ChEBI" id="CHEBI:58702"/>
        <dbReference type="ChEBI" id="CHEBI:456216"/>
        <dbReference type="EC" id="4.1.1.49"/>
    </reaction>
</comment>
<comment type="cofactor">
    <cofactor evidence="1">
        <name>Mn(2+)</name>
        <dbReference type="ChEBI" id="CHEBI:29035"/>
    </cofactor>
    <text evidence="1">Binds 1 Mn(2+) ion per subunit.</text>
</comment>
<comment type="pathway">
    <text evidence="1">Carbohydrate biosynthesis; gluconeogenesis.</text>
</comment>
<comment type="subunit">
    <text evidence="1">Monomer.</text>
</comment>
<comment type="subcellular location">
    <subcellularLocation>
        <location evidence="1">Cytoplasm</location>
    </subcellularLocation>
</comment>
<comment type="similarity">
    <text evidence="1">Belongs to the phosphoenolpyruvate carboxykinase (ATP) family.</text>
</comment>
<evidence type="ECO:0000255" key="1">
    <source>
        <dbReference type="HAMAP-Rule" id="MF_00453"/>
    </source>
</evidence>
<gene>
    <name evidence="1" type="primary">pckA</name>
    <name type="ordered locus">SG3938</name>
</gene>
<proteinExistence type="inferred from homology"/>
<protein>
    <recommendedName>
        <fullName evidence="1">Phosphoenolpyruvate carboxykinase (ATP)</fullName>
        <shortName evidence="1">PCK</shortName>
        <shortName evidence="1">PEP carboxykinase</shortName>
        <shortName evidence="1">PEPCK</shortName>
        <ecNumber evidence="1">4.1.1.49</ecNumber>
    </recommendedName>
</protein>
<accession>B5R7L4</accession>
<organism>
    <name type="scientific">Salmonella gallinarum (strain 287/91 / NCTC 13346)</name>
    <dbReference type="NCBI Taxonomy" id="550538"/>
    <lineage>
        <taxon>Bacteria</taxon>
        <taxon>Pseudomonadati</taxon>
        <taxon>Pseudomonadota</taxon>
        <taxon>Gammaproteobacteria</taxon>
        <taxon>Enterobacterales</taxon>
        <taxon>Enterobacteriaceae</taxon>
        <taxon>Salmonella</taxon>
    </lineage>
</organism>
<keyword id="KW-0067">ATP-binding</keyword>
<keyword id="KW-0963">Cytoplasm</keyword>
<keyword id="KW-0210">Decarboxylase</keyword>
<keyword id="KW-0312">Gluconeogenesis</keyword>
<keyword id="KW-0456">Lyase</keyword>
<keyword id="KW-0464">Manganese</keyword>
<keyword id="KW-0479">Metal-binding</keyword>
<keyword id="KW-0547">Nucleotide-binding</keyword>
<sequence length="539" mass="59613">MRVNNLTPQDLKAYGINDVQDIVYNPSYDTLYQEELNPGLEGYERGVLTNLGAVAVDTGIFTGRSPKDKYIVRDDTTRDTLWWSDKGKGKNDNKPLSQETWQHLKGLVTHQLSGKRLFIVDAFCGANADTRLSVRFITEVAWQAHFVKNMFIRPTDEELVGFKPDFIVMNGAKCTNPQWKEQGLNSENFVALNLTERIQLIGGTWYGGEMKKGMFSVMNYLLPLKGIASMHCSANVGEKGDVAVFFGLSGTGKTTLSTDPKRRLIGDDEHGWDDDGVFNFEGGCYAKTIKLSKEAEPEIYHAIRRDALLENVTVREDGTVDFDDGSKTENTRVSYPIYHIDNIVKPVSKAGHATKVIFLTADAFGVLPPVSRLTANQTQYHFLSGFTAKLAGTERGVTEPTPTFSACFGAAFLTLHPTQYAEVLVKRMQAAGAQAYLVNTGWNGTGKRISIKDTRAIIDAILNGSLDNAETFRLPLFDLAIPTELPGVDTHILDPRNTYASPEQWQEKATALAKLFIENFEKYTDTPAGEALVSAGPKL</sequence>
<reference key="1">
    <citation type="journal article" date="2008" name="Genome Res.">
        <title>Comparative genome analysis of Salmonella enteritidis PT4 and Salmonella gallinarum 287/91 provides insights into evolutionary and host adaptation pathways.</title>
        <authorList>
            <person name="Thomson N.R."/>
            <person name="Clayton D.J."/>
            <person name="Windhorst D."/>
            <person name="Vernikos G."/>
            <person name="Davidson S."/>
            <person name="Churcher C."/>
            <person name="Quail M.A."/>
            <person name="Stevens M."/>
            <person name="Jones M.A."/>
            <person name="Watson M."/>
            <person name="Barron A."/>
            <person name="Layton A."/>
            <person name="Pickard D."/>
            <person name="Kingsley R.A."/>
            <person name="Bignell A."/>
            <person name="Clark L."/>
            <person name="Harris B."/>
            <person name="Ormond D."/>
            <person name="Abdellah Z."/>
            <person name="Brooks K."/>
            <person name="Cherevach I."/>
            <person name="Chillingworth T."/>
            <person name="Woodward J."/>
            <person name="Norberczak H."/>
            <person name="Lord A."/>
            <person name="Arrowsmith C."/>
            <person name="Jagels K."/>
            <person name="Moule S."/>
            <person name="Mungall K."/>
            <person name="Saunders M."/>
            <person name="Whitehead S."/>
            <person name="Chabalgoity J.A."/>
            <person name="Maskell D."/>
            <person name="Humphreys T."/>
            <person name="Roberts M."/>
            <person name="Barrow P.A."/>
            <person name="Dougan G."/>
            <person name="Parkhill J."/>
        </authorList>
    </citation>
    <scope>NUCLEOTIDE SEQUENCE [LARGE SCALE GENOMIC DNA]</scope>
    <source>
        <strain>287/91 / NCTC 13346</strain>
    </source>
</reference>